<keyword id="KW-1003">Cell membrane</keyword>
<keyword id="KW-0963">Cytoplasm</keyword>
<keyword id="KW-0217">Developmental protein</keyword>
<keyword id="KW-0221">Differentiation</keyword>
<keyword id="KW-1015">Disulfide bond</keyword>
<keyword id="KW-0245">EGF-like domain</keyword>
<keyword id="KW-0325">Glycoprotein</keyword>
<keyword id="KW-0472">Membrane</keyword>
<keyword id="KW-0914">Notch signaling pathway</keyword>
<keyword id="KW-0539">Nucleus</keyword>
<keyword id="KW-1185">Reference proteome</keyword>
<keyword id="KW-0677">Repeat</keyword>
<keyword id="KW-0732">Signal</keyword>
<keyword id="KW-0812">Transmembrane</keyword>
<keyword id="KW-1133">Transmembrane helix</keyword>
<comment type="function">
    <text evidence="6 7 8 9 10 11 12 13 14 15 16">Probable ligand for lin-12/Notch and glp-1/Notch receptors and involved in the mediation of Notch signaling (PubMed:14960273, PubMed:7568229, PubMed:8575327). Involved in the lin-12/Notch pathway signaling of cell fate in vulval precursor cells (VPCs), acting redundantly with dsl-1 and lag-2 (PubMed:14960273, PubMed:7568229). Contributes to the establishment of the dorsal-ventral axis in early embryos (PubMed:18036582, PubMed:8156602). Involved in the specification of the blastomere cell ABp fate, probably acting as a signal from the P2 blastomere to the glp-1/Notch receptor on ABp and ABa (PubMed:7925031, PubMed:8156602, PubMed:8674418). Probably acts as a signal, from the secondary vulval epithelial cells and the vulval muscle type 1 (vm1) cells, to activate the lin-12/Notch pathway in type 2 vulval muscle (vm2) cells, contributing to formation of the postsynaptic muscle plasma membrane extensions, known as muscle arms (PubMed:23539368). Required for oocyte growth control, acting redundantly with lag-2, perhaps signaling via the glp-1/Notch pathway (PubMed:19502484). Plays a somatic role in ovulation during adulthood, perhaps via lin-12/Notch signaling (PubMed:29371032). Involved in establishing left-right asymmetry during intestinal organogenesis (PubMed:10903169).</text>
</comment>
<comment type="subcellular location">
    <subcellularLocation>
        <location evidence="16">Cell membrane</location>
        <topology evidence="2">Single-pass type I membrane protein</topology>
    </subcellularLocation>
    <subcellularLocation>
        <location evidence="16">Nucleus</location>
    </subcellularLocation>
    <subcellularLocation>
        <location evidence="16">Cytoplasm</location>
    </subcellularLocation>
    <text evidence="16">Nuclear localization of transcripts at 36-cell stage in embryos.</text>
</comment>
<comment type="developmental stage">
    <text evidence="7 8 9 10 16">First expressed in late 2-cell stage embryos at the anterior periphery of the P1 blastomere, where P1 contacts the AB blastomere (at protein level) (PubMed:8674418). Maternally expressed in newly fertilised eggs, and present in all blastomeres between 1-cell and 8-cell stages (PubMed:8674418). After the 8-cell stage, rapidly disappears from all somatic blastomeres, and then expressed in P3 blastomere at the 12 cell stage (PubMed:8674418). In 36-cell stage and later embryos, can be detected in one to five unidentified cells (PubMed:8674418). Expressed in the P6.p vulval precursor cell (VPC) during larval L3 stage, coinciding with extension and reflexing of the gonad (PubMed:14960273). Expressed in cells immediately adjacent to ventral mesodermal lineage (M lineage) cells, but not next to dorsal M lineage cells, beginning at the 4-M stage (PubMed:18036582). Expressed in the distal tip cell (DTC) starting in the larval L3 stage (PubMed:19502484). Expressed in the secondary vulval epithelial cells and the non-target vm1 cells at the larval L4 stage (PubMed:23539368).</text>
</comment>
<comment type="disruption phenotype">
    <text evidence="7 8 9 11">RNAi-mediated knockdown in the L1 larval stage causes an endomitotic oocyte phenotype; effect not seen if knockdown is targeted to germline, rather than somatic cells (PubMed:29371032). RNAi-mediated knockdown alters ovulation (PubMed:29371032). Spermatheca calcium flux is altered by RNAi-mediated knockdown (PubMed:29371032). RNAi-mediated knockdown, on a lag-2 mutant background, induces the presence of 1-2 extra mesodermal lineage (M lineage)-derived coelomocytes (PubMed:18036582). RNAi-mediated knockdown on a lin-15 mutant background, causes adjacent vulval precursor cells (VPCs) to adopt altered cell fate (PubMed:14960273). On a lag-2 mutant background, RNAi-mediated knockdown causes germ cells to display nuclear morphology consistent with meiotic prophase or gametogenesis in adult hermaphrodites (PubMed:19502484). RNAi-mediated knockdown, when combined with RNAi-mediated knockdown of lag-2, on a dsl-1 mutant background, causes adjacent vulval precursor cells (VPCs) to adopt altered cell fate; phenotype exacerbated on double mutant lin-15;dsl-1 background (PubMed:14960273).</text>
</comment>
<accession>P41990</accession>
<accession>Q9TXN4</accession>
<proteinExistence type="evidence at protein level"/>
<sequence length="515" mass="55818">MTNFSSLLTTIFLCIISSATGSGTIELLISSPQTVLVEPTVCANFECAAPDDLSLARKVQRRVPLRFGTGQYHGEARERIDLHLKIIEPTSNEILALQHHRPAADTEWNSDAPIVIETSRGFNVTVQLRNLCSSNYHGKRCNRYCIANAKLHWECSTHGVRRCSAGWSGEDCSNPICAGGCSNRGRCVAPNQCSCADGFNGTRCEQCLPRAGCVNGDCVNETPNTCKCRDGFIGDRCDIDIKICSLEKPCANGGICSIDSSSSTGYKCHCPFEFVGSQCKTPLSKVRCSAEHVCKNGGACISMDDTNIQCKCRRGFSGKFCEIGNHGDCSAMRCSAGETCQISGDFAICVENDELLLTTNKPAETTKSVEKWREPRKTANDEQASDELQLRLIAAICVLFSVCVIGLALVSFFFYMHSFSKWKHPSSQQAGGSTILPTTTSIPMSTTSSGTGSPVYKVCIIDSEHRGNAPGSSSDSEPDHHCPPPHRHSPPPAYSSLVLYKKVPMAADDESSFRV</sequence>
<dbReference type="EMBL" id="U07628">
    <property type="protein sequence ID" value="AAA17738.1"/>
    <property type="molecule type" value="mRNA"/>
</dbReference>
<dbReference type="EMBL" id="FO081608">
    <property type="protein sequence ID" value="CCD72794.1"/>
    <property type="molecule type" value="Genomic_DNA"/>
</dbReference>
<dbReference type="PIR" id="D88991">
    <property type="entry name" value="D88991"/>
</dbReference>
<dbReference type="RefSeq" id="NP_503882.2">
    <property type="nucleotide sequence ID" value="NM_071481.4"/>
</dbReference>
<dbReference type="BioGRID" id="43815">
    <property type="interactions" value="1"/>
</dbReference>
<dbReference type="IntAct" id="P41990">
    <property type="interactions" value="1"/>
</dbReference>
<dbReference type="STRING" id="6239.K08D9.3a.1"/>
<dbReference type="GlyCosmos" id="P41990">
    <property type="glycosylation" value="2 sites, No reported glycans"/>
</dbReference>
<dbReference type="PaxDb" id="6239-K08D9.3"/>
<dbReference type="EnsemblMetazoa" id="K08D9.3a.1">
    <property type="protein sequence ID" value="K08D9.3a.1"/>
    <property type="gene ID" value="WBGene00000168"/>
</dbReference>
<dbReference type="GeneID" id="178759"/>
<dbReference type="KEGG" id="cel:CELE_K08D9.3"/>
<dbReference type="UCSC" id="K08D9.3">
    <property type="organism name" value="c. elegans"/>
</dbReference>
<dbReference type="AGR" id="WB:WBGene00000168"/>
<dbReference type="CTD" id="178759"/>
<dbReference type="WormBase" id="K08D9.3a">
    <property type="protein sequence ID" value="CE30819"/>
    <property type="gene ID" value="WBGene00000168"/>
    <property type="gene designation" value="apx-1"/>
</dbReference>
<dbReference type="eggNOG" id="KOG1217">
    <property type="taxonomic scope" value="Eukaryota"/>
</dbReference>
<dbReference type="GeneTree" id="ENSGT00970000196457"/>
<dbReference type="HOGENOM" id="CLU_533452_0_0_1"/>
<dbReference type="InParanoid" id="P41990"/>
<dbReference type="OMA" id="TVCANFE"/>
<dbReference type="OrthoDB" id="5912267at2759"/>
<dbReference type="PhylomeDB" id="P41990"/>
<dbReference type="SignaLink" id="P41990"/>
<dbReference type="PRO" id="PR:P41990"/>
<dbReference type="Proteomes" id="UP000001940">
    <property type="component" value="Chromosome V"/>
</dbReference>
<dbReference type="Bgee" id="WBGene00000168">
    <property type="expression patterns" value="Expressed in somatic blastomere (C elegans) and 20 other cell types or tissues"/>
</dbReference>
<dbReference type="ExpressionAtlas" id="P41990">
    <property type="expression patterns" value="baseline and differential"/>
</dbReference>
<dbReference type="GO" id="GO:0005737">
    <property type="term" value="C:cytoplasm"/>
    <property type="evidence" value="ECO:0007669"/>
    <property type="project" value="UniProtKB-SubCell"/>
</dbReference>
<dbReference type="GO" id="GO:0005634">
    <property type="term" value="C:nucleus"/>
    <property type="evidence" value="ECO:0007669"/>
    <property type="project" value="UniProtKB-SubCell"/>
</dbReference>
<dbReference type="GO" id="GO:0005886">
    <property type="term" value="C:plasma membrane"/>
    <property type="evidence" value="ECO:0007669"/>
    <property type="project" value="UniProtKB-SubCell"/>
</dbReference>
<dbReference type="GO" id="GO:0005112">
    <property type="term" value="F:Notch binding"/>
    <property type="evidence" value="ECO:0000318"/>
    <property type="project" value="GO_Central"/>
</dbReference>
<dbReference type="GO" id="GO:0008595">
    <property type="term" value="P:anterior/posterior axis specification, embryo"/>
    <property type="evidence" value="ECO:0000303"/>
    <property type="project" value="UniProtKB"/>
</dbReference>
<dbReference type="GO" id="GO:0030154">
    <property type="term" value="P:cell differentiation"/>
    <property type="evidence" value="ECO:0000303"/>
    <property type="project" value="UniProtKB"/>
</dbReference>
<dbReference type="GO" id="GO:0048858">
    <property type="term" value="P:cell projection morphogenesis"/>
    <property type="evidence" value="ECO:0000315"/>
    <property type="project" value="UniProtKB"/>
</dbReference>
<dbReference type="GO" id="GO:0009880">
    <property type="term" value="P:embryonic pattern specification"/>
    <property type="evidence" value="ECO:0000315"/>
    <property type="project" value="WormBase"/>
</dbReference>
<dbReference type="GO" id="GO:0031129">
    <property type="term" value="P:inductive cell-cell signaling"/>
    <property type="evidence" value="ECO:0000315"/>
    <property type="project" value="UniProtKB"/>
</dbReference>
<dbReference type="GO" id="GO:0046331">
    <property type="term" value="P:lateral inhibition"/>
    <property type="evidence" value="ECO:0000316"/>
    <property type="project" value="WormBase"/>
</dbReference>
<dbReference type="GO" id="GO:0016331">
    <property type="term" value="P:morphogenesis of embryonic epithelium"/>
    <property type="evidence" value="ECO:0000315"/>
    <property type="project" value="WormBase"/>
</dbReference>
<dbReference type="GO" id="GO:0007219">
    <property type="term" value="P:Notch signaling pathway"/>
    <property type="evidence" value="ECO:0007669"/>
    <property type="project" value="UniProtKB-KW"/>
</dbReference>
<dbReference type="GO" id="GO:1905936">
    <property type="term" value="P:regulation of germ cell proliferation"/>
    <property type="evidence" value="ECO:0000316"/>
    <property type="project" value="UniProtKB"/>
</dbReference>
<dbReference type="GO" id="GO:0040028">
    <property type="term" value="P:regulation of vulval development"/>
    <property type="evidence" value="ECO:0000316"/>
    <property type="project" value="WormBase"/>
</dbReference>
<dbReference type="FunFam" id="2.10.25.10:FF:000744">
    <property type="entry name" value="Delta-like protein"/>
    <property type="match status" value="1"/>
</dbReference>
<dbReference type="FunFam" id="2.10.25.10:FF:001016">
    <property type="entry name" value="Delta-like protein"/>
    <property type="match status" value="1"/>
</dbReference>
<dbReference type="FunFam" id="2.10.25.140:FF:000002">
    <property type="entry name" value="Delta-like protein"/>
    <property type="match status" value="1"/>
</dbReference>
<dbReference type="FunFam" id="2.10.25.10:FF:000699">
    <property type="entry name" value="Uncharacterized protein, isoform C"/>
    <property type="match status" value="1"/>
</dbReference>
<dbReference type="Gene3D" id="2.10.25.140">
    <property type="match status" value="1"/>
</dbReference>
<dbReference type="Gene3D" id="2.10.25.10">
    <property type="entry name" value="Laminin"/>
    <property type="match status" value="3"/>
</dbReference>
<dbReference type="InterPro" id="IPR001774">
    <property type="entry name" value="DSL"/>
</dbReference>
<dbReference type="InterPro" id="IPR000742">
    <property type="entry name" value="EGF-like_dom"/>
</dbReference>
<dbReference type="InterPro" id="IPR051022">
    <property type="entry name" value="Notch_Cell-Fate_Det"/>
</dbReference>
<dbReference type="PANTHER" id="PTHR24049">
    <property type="entry name" value="CRUMBS FAMILY MEMBER"/>
    <property type="match status" value="1"/>
</dbReference>
<dbReference type="PANTHER" id="PTHR24049:SF22">
    <property type="entry name" value="DROSOPHILA CRUMBS HOMOLOG"/>
    <property type="match status" value="1"/>
</dbReference>
<dbReference type="Pfam" id="PF25337">
    <property type="entry name" value="C2_N_APX"/>
    <property type="match status" value="1"/>
</dbReference>
<dbReference type="Pfam" id="PF01414">
    <property type="entry name" value="DSL"/>
    <property type="match status" value="1"/>
</dbReference>
<dbReference type="SMART" id="SM00051">
    <property type="entry name" value="DSL"/>
    <property type="match status" value="1"/>
</dbReference>
<dbReference type="SMART" id="SM00181">
    <property type="entry name" value="EGF"/>
    <property type="match status" value="4"/>
</dbReference>
<dbReference type="SUPFAM" id="SSF57196">
    <property type="entry name" value="EGF/Laminin"/>
    <property type="match status" value="2"/>
</dbReference>
<dbReference type="PROSITE" id="PS51051">
    <property type="entry name" value="DSL"/>
    <property type="match status" value="1"/>
</dbReference>
<dbReference type="PROSITE" id="PS00022">
    <property type="entry name" value="EGF_1"/>
    <property type="match status" value="4"/>
</dbReference>
<dbReference type="PROSITE" id="PS01186">
    <property type="entry name" value="EGF_2"/>
    <property type="match status" value="3"/>
</dbReference>
<dbReference type="PROSITE" id="PS50026">
    <property type="entry name" value="EGF_3"/>
    <property type="match status" value="4"/>
</dbReference>
<gene>
    <name type="primary">apx-1</name>
    <name type="ORF">K08D9.3</name>
</gene>
<name>APX1_CAEEL</name>
<feature type="signal peptide" evidence="2">
    <location>
        <begin position="1"/>
        <end position="26"/>
    </location>
</feature>
<feature type="chain" id="PRO_0000007480" description="Anterior pharynx in excess protein 1">
    <location>
        <begin position="27"/>
        <end position="515"/>
    </location>
</feature>
<feature type="topological domain" description="Extracellular" evidence="2">
    <location>
        <begin position="27"/>
        <end position="392"/>
    </location>
</feature>
<feature type="transmembrane region" description="Helical" evidence="2">
    <location>
        <begin position="393"/>
        <end position="413"/>
    </location>
</feature>
<feature type="topological domain" description="Cytoplasmic" evidence="2">
    <location>
        <begin position="414"/>
        <end position="515"/>
    </location>
</feature>
<feature type="domain" description="DSL" evidence="4">
    <location>
        <begin position="130"/>
        <end position="172"/>
    </location>
</feature>
<feature type="domain" description="EGF-like 1" evidence="3">
    <location>
        <begin position="173"/>
        <end position="205"/>
    </location>
</feature>
<feature type="domain" description="EGF-like 2" evidence="3">
    <location>
        <begin position="203"/>
        <end position="238"/>
    </location>
</feature>
<feature type="domain" description="EGF-like 3" evidence="3">
    <location>
        <begin position="240"/>
        <end position="280"/>
    </location>
</feature>
<feature type="domain" description="EGF-like 4" evidence="3">
    <location>
        <begin position="284"/>
        <end position="322"/>
    </location>
</feature>
<feature type="domain" description="EGF-like 5; incomplete" evidence="3">
    <location>
        <begin position="325"/>
        <end position="349"/>
    </location>
</feature>
<feature type="region of interest" description="Disordered" evidence="5">
    <location>
        <begin position="427"/>
        <end position="452"/>
    </location>
</feature>
<feature type="region of interest" description="Disordered" evidence="5">
    <location>
        <begin position="466"/>
        <end position="494"/>
    </location>
</feature>
<feature type="compositionally biased region" description="Low complexity" evidence="5">
    <location>
        <begin position="431"/>
        <end position="452"/>
    </location>
</feature>
<feature type="glycosylation site" description="N-linked (GlcNAc...) asparagine" evidence="2">
    <location>
        <position position="123"/>
    </location>
</feature>
<feature type="glycosylation site" description="N-linked (GlcNAc...) asparagine" evidence="2">
    <location>
        <position position="200"/>
    </location>
</feature>
<feature type="disulfide bond" evidence="1">
    <location>
        <begin position="132"/>
        <end position="141"/>
    </location>
</feature>
<feature type="disulfide bond" evidence="1">
    <location>
        <begin position="145"/>
        <end position="155"/>
    </location>
</feature>
<feature type="disulfide bond" evidence="1">
    <location>
        <begin position="163"/>
        <end position="172"/>
    </location>
</feature>
<feature type="disulfide bond" evidence="1">
    <location>
        <begin position="177"/>
        <end position="187"/>
    </location>
</feature>
<feature type="disulfide bond" evidence="1">
    <location>
        <begin position="181"/>
        <end position="193"/>
    </location>
</feature>
<feature type="disulfide bond" evidence="1">
    <location>
        <begin position="195"/>
        <end position="204"/>
    </location>
</feature>
<feature type="disulfide bond" evidence="1">
    <location>
        <begin position="213"/>
        <end position="218"/>
    </location>
</feature>
<feature type="disulfide bond" evidence="1">
    <location>
        <begin position="228"/>
        <end position="237"/>
    </location>
</feature>
<feature type="disulfide bond" evidence="1">
    <location>
        <begin position="244"/>
        <end position="256"/>
    </location>
</feature>
<feature type="disulfide bond" evidence="1">
    <location>
        <begin position="250"/>
        <end position="268"/>
    </location>
</feature>
<feature type="disulfide bond" evidence="1">
    <location>
        <begin position="270"/>
        <end position="279"/>
    </location>
</feature>
<feature type="disulfide bond" evidence="1">
    <location>
        <begin position="288"/>
        <end position="300"/>
    </location>
</feature>
<feature type="disulfide bond" evidence="1">
    <location>
        <begin position="294"/>
        <end position="310"/>
    </location>
</feature>
<feature type="disulfide bond" evidence="1">
    <location>
        <begin position="312"/>
        <end position="321"/>
    </location>
</feature>
<feature type="mutagenesis site" description="In wy755; egg-laying defect due to, at least in part, the absence of muscle plasma membrane extensions, known as muscle arms, on type 2 vulval muscles (vm2)." evidence="10">
    <original>G</original>
    <variation>E</variation>
    <location>
        <position position="159"/>
    </location>
</feature>
<feature type="mutagenesis site" description="Causes abnormal proximal proliferation in the germline and / or tumorous germline phenotypes." evidence="15">
    <location>
        <begin position="188"/>
        <end position="515"/>
    </location>
</feature>
<feature type="mutagenesis site" description="On lag-2 mutant background, typical mutant phenotype absent; however, on the same mutant background, activates lin-12 in the vulval precursor cells (VPCs) causing formation of ectopic vulvae, and / or activates glp-1, causing tumorous germline phenotype. On a glp-1 mutant background, hermaphrodites may have tumorous germlines at the permissive temperature (15 degrees Celsius) but, after shifting to the restrictive temperature (25 degrees Celsius), the germ cells enter meiosis." evidence="15">
    <location>
        <begin position="402"/>
        <end position="515"/>
    </location>
</feature>
<organism>
    <name type="scientific">Caenorhabditis elegans</name>
    <dbReference type="NCBI Taxonomy" id="6239"/>
    <lineage>
        <taxon>Eukaryota</taxon>
        <taxon>Metazoa</taxon>
        <taxon>Ecdysozoa</taxon>
        <taxon>Nematoda</taxon>
        <taxon>Chromadorea</taxon>
        <taxon>Rhabditida</taxon>
        <taxon>Rhabditina</taxon>
        <taxon>Rhabditomorpha</taxon>
        <taxon>Rhabditoidea</taxon>
        <taxon>Rhabditidae</taxon>
        <taxon>Peloderinae</taxon>
        <taxon>Caenorhabditis</taxon>
    </lineage>
</organism>
<reference key="1">
    <citation type="journal article" date="1994" name="Cell">
        <title>The maternal genes apx-1 and glp-1 and establishment of dorsal-ventral polarity in the early C. elegans embryo.</title>
        <authorList>
            <person name="Mello C.C."/>
            <person name="Draper B.W."/>
            <person name="Priess J.R."/>
        </authorList>
    </citation>
    <scope>NUCLEOTIDE SEQUENCE [MRNA]</scope>
    <scope>FUNCTION</scope>
    <source>
        <strain>Bristol N2</strain>
    </source>
</reference>
<reference key="2">
    <citation type="journal article" date="1998" name="Science">
        <title>Genome sequence of the nematode C. elegans: a platform for investigating biology.</title>
        <authorList>
            <consortium name="The C. elegans sequencing consortium"/>
        </authorList>
    </citation>
    <scope>NUCLEOTIDE SEQUENCE [LARGE SCALE GENOMIC DNA]</scope>
    <source>
        <strain>Bristol N2</strain>
    </source>
</reference>
<reference key="3">
    <citation type="journal article" date="1994" name="Development">
        <title>Two maternal genes, apx-1 and pie-1, are required to distinguish the fates of equivalent blastomeres in the early Caenorhabditis elegans embryo.</title>
        <authorList>
            <person name="Mango S.E."/>
            <person name="Thorpe C.J."/>
            <person name="Martin P.R."/>
            <person name="Chamberlain S.H."/>
            <person name="Bowerman B."/>
        </authorList>
    </citation>
    <scope>FUNCTION</scope>
</reference>
<reference key="4">
    <citation type="journal article" date="1995" name="Development">
        <title>Interchangeability of Caenorhabditis elegans DSL proteins and intrinsic signalling activity of their extracellular domains in vivo.</title>
        <authorList>
            <person name="Fitzgerald K."/>
            <person name="Greenwald I."/>
        </authorList>
    </citation>
    <scope>FUNCTION</scope>
    <scope>MUTAGENESIS OF 188-VAL--VAL-515 AND 402-VAL--VAL-515</scope>
</reference>
<reference key="5">
    <citation type="journal article" date="1995" name="Proc. Natl. Acad. Sci. U.S.A.">
        <title>APX-1 can substitute for its homolog LAG-2 to direct cell interactions throughout Caenorhabditis elegans development.</title>
        <authorList>
            <person name="Gao D."/>
            <person name="Kimble J."/>
        </authorList>
    </citation>
    <scope>FUNCTION</scope>
</reference>
<reference key="6">
    <citation type="journal article" date="1996" name="Development">
        <title>An inductive interaction in 4-cell stage C. elegans embryos involves APX-1 expression in the signalling cell.</title>
        <authorList>
            <person name="Mickey K.M."/>
            <person name="Mello C.C."/>
            <person name="Montgomery M.K."/>
            <person name="Fire A."/>
            <person name="Priess J.R."/>
        </authorList>
    </citation>
    <scope>FUNCTION</scope>
    <scope>SUBCELLULAR LOCATION</scope>
    <scope>DEVELOPMENTAL STAGE</scope>
</reference>
<reference key="7">
    <citation type="journal article" date="2000" name="Development">
        <title>Left-right asymmetry in C. elegans intestine organogenesis involves a LIN-12/Notch signaling pathway.</title>
        <authorList>
            <person name="Hermann G.J."/>
            <person name="Leung B."/>
            <person name="Priess J.R."/>
        </authorList>
    </citation>
    <scope>FUNCTION</scope>
</reference>
<reference key="8">
    <citation type="journal article" date="2004" name="Dev. Cell">
        <title>The lateral signal for LIN-12/Notch in C. elegans vulval development comprises redundant secreted and transmembrane DSL proteins.</title>
        <authorList>
            <person name="Chen N."/>
            <person name="Greenwald I."/>
        </authorList>
    </citation>
    <scope>FUNCTION</scope>
    <scope>DEVELOPMENTAL STAGE</scope>
    <scope>DISRUPTION PHENOTYPE</scope>
</reference>
<reference key="9">
    <citation type="journal article" date="2008" name="Dev. Biol.">
        <title>Dorsoventral patterning of the C. elegans postembryonic mesoderm requires both LIN-12/Notch and TGFbeta signaling.</title>
        <authorList>
            <person name="Foehr M.L."/>
            <person name="Liu J."/>
        </authorList>
    </citation>
    <scope>FUNCTION</scope>
    <scope>DEVELOPMENTAL STAGE</scope>
    <scope>DISRUPTION PHENOTYPE</scope>
</reference>
<reference key="10">
    <citation type="journal article" date="2009" name="Development">
        <title>MSP and GLP-1/Notch signaling coordinately regulate actomyosin-dependent cytoplasmic streaming and oocyte growth in C. elegans.</title>
        <authorList>
            <person name="Nadarajan S."/>
            <person name="Govindan J.A."/>
            <person name="McGovern M."/>
            <person name="Hubbard E.J."/>
            <person name="Greenstein D."/>
        </authorList>
    </citation>
    <scope>FUNCTION</scope>
    <scope>DEVELOPMENTAL STAGE</scope>
    <scope>DISRUPTION PHENOTYPE</scope>
</reference>
<reference key="11">
    <citation type="journal article" date="2013" name="Elife">
        <title>LIN-12/Notch signaling instructs postsynaptic muscle arm development by regulating UNC-40/DCC and MADD-2 in Caenorhabditis elegans.</title>
        <authorList>
            <person name="Li P."/>
            <person name="Collins K.M."/>
            <person name="Koelle M.R."/>
            <person name="Shen K."/>
        </authorList>
    </citation>
    <scope>FUNCTION</scope>
    <scope>DEVELOPMENTAL STAGE</scope>
    <scope>MUTAGENESIS OF GLY-159</scope>
</reference>
<reference key="12">
    <citation type="journal article" date="2018" name="Dev. Biol.">
        <title>The DSL ligand APX-1 is required for normal ovulation in C. elegans.</title>
        <authorList>
            <person name="McGovern M."/>
            <person name="Castaneda P.G."/>
            <person name="Pekar O."/>
            <person name="Vallier L.G."/>
            <person name="Cram E.J."/>
            <person name="Hubbard E.J.A."/>
        </authorList>
    </citation>
    <scope>FUNCTION</scope>
    <scope>DISRUPTION PHENOTYPE</scope>
</reference>
<protein>
    <recommendedName>
        <fullName>Anterior pharynx in excess protein 1</fullName>
    </recommendedName>
</protein>
<evidence type="ECO:0000250" key="1"/>
<evidence type="ECO:0000255" key="2"/>
<evidence type="ECO:0000255" key="3">
    <source>
        <dbReference type="PROSITE-ProRule" id="PRU00076"/>
    </source>
</evidence>
<evidence type="ECO:0000255" key="4">
    <source>
        <dbReference type="PROSITE-ProRule" id="PRU00377"/>
    </source>
</evidence>
<evidence type="ECO:0000256" key="5">
    <source>
        <dbReference type="SAM" id="MobiDB-lite"/>
    </source>
</evidence>
<evidence type="ECO:0000269" key="6">
    <source>
    </source>
</evidence>
<evidence type="ECO:0000269" key="7">
    <source>
    </source>
</evidence>
<evidence type="ECO:0000269" key="8">
    <source>
    </source>
</evidence>
<evidence type="ECO:0000269" key="9">
    <source>
    </source>
</evidence>
<evidence type="ECO:0000269" key="10">
    <source>
    </source>
</evidence>
<evidence type="ECO:0000269" key="11">
    <source>
    </source>
</evidence>
<evidence type="ECO:0000269" key="12">
    <source>
    </source>
</evidence>
<evidence type="ECO:0000269" key="13">
    <source>
    </source>
</evidence>
<evidence type="ECO:0000269" key="14">
    <source>
    </source>
</evidence>
<evidence type="ECO:0000269" key="15">
    <source>
    </source>
</evidence>
<evidence type="ECO:0000269" key="16">
    <source>
    </source>
</evidence>